<comment type="function">
    <text evidence="3">Required for correct development of the embryonic midline glial cells which are necessary for the formation of distinct segmental commissures.</text>
</comment>
<comment type="cofactor">
    <cofactor evidence="1">
        <name>heme</name>
        <dbReference type="ChEBI" id="CHEBI:30413"/>
    </cofactor>
</comment>
<comment type="subcellular location">
    <subcellularLocation>
        <location evidence="5">Endoplasmic reticulum membrane</location>
        <topology evidence="5">Peripheral membrane protein</topology>
    </subcellularLocation>
    <subcellularLocation>
        <location evidence="5">Microsome membrane</location>
        <topology evidence="5">Peripheral membrane protein</topology>
    </subcellularLocation>
</comment>
<comment type="miscellaneous">
    <text>Member of the Halloween gene group.</text>
</comment>
<comment type="similarity">
    <text evidence="5">Belongs to the cytochrome P450 family.</text>
</comment>
<comment type="sequence caution" evidence="5">
    <conflict type="frameshift">
        <sequence resource="EMBL-CDS" id="AAL48675"/>
    </conflict>
</comment>
<accession>Q9VRM7</accession>
<accession>Q8SZ84</accession>
<dbReference type="EC" id="1.14.-.-"/>
<dbReference type="EMBL" id="AF484415">
    <property type="protein sequence ID" value="AAQ05973.1"/>
    <property type="molecule type" value="mRNA"/>
</dbReference>
<dbReference type="EMBL" id="AE014296">
    <property type="protein sequence ID" value="AAF50766.3"/>
    <property type="molecule type" value="Genomic_DNA"/>
</dbReference>
<dbReference type="EMBL" id="AY071053">
    <property type="protein sequence ID" value="AAL48675.1"/>
    <property type="status" value="ALT_FRAME"/>
    <property type="molecule type" value="mRNA"/>
</dbReference>
<dbReference type="RefSeq" id="NP_001286943.1">
    <property type="nucleotide sequence ID" value="NM_001300014.1"/>
</dbReference>
<dbReference type="RefSeq" id="NP_647975.2">
    <property type="nucleotide sequence ID" value="NM_139718.3"/>
</dbReference>
<dbReference type="SMR" id="Q9VRM7"/>
<dbReference type="BioGRID" id="64094">
    <property type="interactions" value="5"/>
</dbReference>
<dbReference type="DIP" id="DIP-17643N"/>
<dbReference type="FunCoup" id="Q9VRM7">
    <property type="interactions" value="35"/>
</dbReference>
<dbReference type="IntAct" id="Q9VRM7">
    <property type="interactions" value="4"/>
</dbReference>
<dbReference type="STRING" id="7227.FBpp0312220"/>
<dbReference type="iPTMnet" id="Q9VRM7"/>
<dbReference type="PaxDb" id="7227-FBpp0076836"/>
<dbReference type="EnsemblMetazoa" id="FBtr0077130">
    <property type="protein sequence ID" value="FBpp0076836"/>
    <property type="gene ID" value="FBgn0003486"/>
</dbReference>
<dbReference type="EnsemblMetazoa" id="FBtr0346640">
    <property type="protein sequence ID" value="FBpp0312220"/>
    <property type="gene ID" value="FBgn0003486"/>
</dbReference>
<dbReference type="GeneID" id="38631"/>
<dbReference type="KEGG" id="dme:Dmel_CG10594"/>
<dbReference type="UCSC" id="CG10594-RA">
    <property type="organism name" value="d. melanogaster"/>
</dbReference>
<dbReference type="AGR" id="FB:FBgn0003486"/>
<dbReference type="CTD" id="38631"/>
<dbReference type="FlyBase" id="FBgn0003486">
    <property type="gene designation" value="spo"/>
</dbReference>
<dbReference type="VEuPathDB" id="VectorBase:FBgn0003486"/>
<dbReference type="eggNOG" id="KOG0156">
    <property type="taxonomic scope" value="Eukaryota"/>
</dbReference>
<dbReference type="GeneTree" id="ENSGT00940000167305"/>
<dbReference type="HOGENOM" id="CLU_001570_22_0_1"/>
<dbReference type="InParanoid" id="Q9VRM7"/>
<dbReference type="OMA" id="HFDEIFW"/>
<dbReference type="OrthoDB" id="1470350at2759"/>
<dbReference type="PhylomeDB" id="Q9VRM7"/>
<dbReference type="BioGRID-ORCS" id="38631">
    <property type="hits" value="0 hits in 3 CRISPR screens"/>
</dbReference>
<dbReference type="GenomeRNAi" id="38631"/>
<dbReference type="PRO" id="PR:Q9VRM7"/>
<dbReference type="Proteomes" id="UP000000803">
    <property type="component" value="Chromosome 3L"/>
</dbReference>
<dbReference type="Bgee" id="FBgn0003486">
    <property type="expression patterns" value="Expressed in posterior terminal follicle cell in ovary and 12 other cell types or tissues"/>
</dbReference>
<dbReference type="ExpressionAtlas" id="Q9VRM7">
    <property type="expression patterns" value="baseline and differential"/>
</dbReference>
<dbReference type="GO" id="GO:0005783">
    <property type="term" value="C:endoplasmic reticulum"/>
    <property type="evidence" value="ECO:0000314"/>
    <property type="project" value="FlyBase"/>
</dbReference>
<dbReference type="GO" id="GO:0005789">
    <property type="term" value="C:endoplasmic reticulum membrane"/>
    <property type="evidence" value="ECO:0007669"/>
    <property type="project" value="UniProtKB-SubCell"/>
</dbReference>
<dbReference type="GO" id="GO:0020037">
    <property type="term" value="F:heme binding"/>
    <property type="evidence" value="ECO:0000255"/>
    <property type="project" value="FlyBase"/>
</dbReference>
<dbReference type="GO" id="GO:0005506">
    <property type="term" value="F:iron ion binding"/>
    <property type="evidence" value="ECO:0007669"/>
    <property type="project" value="InterPro"/>
</dbReference>
<dbReference type="GO" id="GO:0004497">
    <property type="term" value="F:monooxygenase activity"/>
    <property type="evidence" value="ECO:0007669"/>
    <property type="project" value="UniProtKB-KW"/>
</dbReference>
<dbReference type="GO" id="GO:0016491">
    <property type="term" value="F:oxidoreductase activity"/>
    <property type="evidence" value="ECO:0000255"/>
    <property type="project" value="FlyBase"/>
</dbReference>
<dbReference type="GO" id="GO:0016705">
    <property type="term" value="F:oxidoreductase activity, acting on paired donors, with incorporation or reduction of molecular oxygen"/>
    <property type="evidence" value="ECO:0007669"/>
    <property type="project" value="InterPro"/>
</dbReference>
<dbReference type="GO" id="GO:0007417">
    <property type="term" value="P:central nervous system development"/>
    <property type="evidence" value="ECO:0000315"/>
    <property type="project" value="FlyBase"/>
</dbReference>
<dbReference type="GO" id="GO:0042335">
    <property type="term" value="P:cuticle development"/>
    <property type="evidence" value="ECO:0000315"/>
    <property type="project" value="FlyBase"/>
</dbReference>
<dbReference type="GO" id="GO:0007391">
    <property type="term" value="P:dorsal closure"/>
    <property type="evidence" value="ECO:0000315"/>
    <property type="project" value="FlyBase"/>
</dbReference>
<dbReference type="GO" id="GO:0006697">
    <property type="term" value="P:ecdysone biosynthetic process"/>
    <property type="evidence" value="ECO:0000315"/>
    <property type="project" value="FlyBase"/>
</dbReference>
<dbReference type="GO" id="GO:0001700">
    <property type="term" value="P:embryonic development via the syncytial blastoderm"/>
    <property type="evidence" value="ECO:0000315"/>
    <property type="project" value="FlyBase"/>
</dbReference>
<dbReference type="GO" id="GO:0048566">
    <property type="term" value="P:embryonic digestive tract development"/>
    <property type="evidence" value="ECO:0000315"/>
    <property type="project" value="FlyBase"/>
</dbReference>
<dbReference type="GO" id="GO:0008258">
    <property type="term" value="P:head involution"/>
    <property type="evidence" value="ECO:0000315"/>
    <property type="project" value="FlyBase"/>
</dbReference>
<dbReference type="GO" id="GO:0007494">
    <property type="term" value="P:midgut development"/>
    <property type="evidence" value="ECO:0000315"/>
    <property type="project" value="FlyBase"/>
</dbReference>
<dbReference type="GO" id="GO:0048477">
    <property type="term" value="P:oogenesis"/>
    <property type="evidence" value="ECO:0000315"/>
    <property type="project" value="FlyBase"/>
</dbReference>
<dbReference type="CDD" id="cd20617">
    <property type="entry name" value="CYP1_2-like"/>
    <property type="match status" value="1"/>
</dbReference>
<dbReference type="FunFam" id="1.10.630.10:FF:000072">
    <property type="entry name" value="3-hydroxyphenylacetate 6 hydroxylase"/>
    <property type="match status" value="1"/>
</dbReference>
<dbReference type="Gene3D" id="1.10.630.10">
    <property type="entry name" value="Cytochrome P450"/>
    <property type="match status" value="1"/>
</dbReference>
<dbReference type="InterPro" id="IPR001128">
    <property type="entry name" value="Cyt_P450"/>
</dbReference>
<dbReference type="InterPro" id="IPR017972">
    <property type="entry name" value="Cyt_P450_CS"/>
</dbReference>
<dbReference type="InterPro" id="IPR002401">
    <property type="entry name" value="Cyt_P450_E_grp-I"/>
</dbReference>
<dbReference type="InterPro" id="IPR036396">
    <property type="entry name" value="Cyt_P450_sf"/>
</dbReference>
<dbReference type="PANTHER" id="PTHR24303:SF31">
    <property type="entry name" value="CYTOCHROME P450 307A1-RELATED"/>
    <property type="match status" value="1"/>
</dbReference>
<dbReference type="PANTHER" id="PTHR24303">
    <property type="entry name" value="HEME-BINDING MONOOXYGENASE FAMILY"/>
    <property type="match status" value="1"/>
</dbReference>
<dbReference type="Pfam" id="PF00067">
    <property type="entry name" value="p450"/>
    <property type="match status" value="1"/>
</dbReference>
<dbReference type="PRINTS" id="PR00463">
    <property type="entry name" value="EP450I"/>
</dbReference>
<dbReference type="PRINTS" id="PR00385">
    <property type="entry name" value="P450"/>
</dbReference>
<dbReference type="SUPFAM" id="SSF48264">
    <property type="entry name" value="Cytochrome P450"/>
    <property type="match status" value="1"/>
</dbReference>
<dbReference type="PROSITE" id="PS00086">
    <property type="entry name" value="CYTOCHROME_P450"/>
    <property type="match status" value="1"/>
</dbReference>
<protein>
    <recommendedName>
        <fullName>Cytochrome P450 307a1</fullName>
        <ecNumber>1.14.-.-</ecNumber>
    </recommendedName>
    <alternativeName>
        <fullName>CYPCCCVIIA1</fullName>
    </alternativeName>
    <alternativeName>
        <fullName>Protein spook</fullName>
    </alternativeName>
</protein>
<reference key="1">
    <citation type="submission" date="2002-02" db="EMBL/GenBank/DDBJ databases">
        <title>Cloning and characterization of Halloween group mutants.</title>
        <authorList>
            <person name="Petryk A."/>
            <person name="Jarcho M."/>
            <person name="O'Connor M.B."/>
        </authorList>
    </citation>
    <scope>NUCLEOTIDE SEQUENCE [MRNA]</scope>
</reference>
<reference key="2">
    <citation type="journal article" date="2000" name="Science">
        <title>The genome sequence of Drosophila melanogaster.</title>
        <authorList>
            <person name="Adams M.D."/>
            <person name="Celniker S.E."/>
            <person name="Holt R.A."/>
            <person name="Evans C.A."/>
            <person name="Gocayne J.D."/>
            <person name="Amanatides P.G."/>
            <person name="Scherer S.E."/>
            <person name="Li P.W."/>
            <person name="Hoskins R.A."/>
            <person name="Galle R.F."/>
            <person name="George R.A."/>
            <person name="Lewis S.E."/>
            <person name="Richards S."/>
            <person name="Ashburner M."/>
            <person name="Henderson S.N."/>
            <person name="Sutton G.G."/>
            <person name="Wortman J.R."/>
            <person name="Yandell M.D."/>
            <person name="Zhang Q."/>
            <person name="Chen L.X."/>
            <person name="Brandon R.C."/>
            <person name="Rogers Y.-H.C."/>
            <person name="Blazej R.G."/>
            <person name="Champe M."/>
            <person name="Pfeiffer B.D."/>
            <person name="Wan K.H."/>
            <person name="Doyle C."/>
            <person name="Baxter E.G."/>
            <person name="Helt G."/>
            <person name="Nelson C.R."/>
            <person name="Miklos G.L.G."/>
            <person name="Abril J.F."/>
            <person name="Agbayani A."/>
            <person name="An H.-J."/>
            <person name="Andrews-Pfannkoch C."/>
            <person name="Baldwin D."/>
            <person name="Ballew R.M."/>
            <person name="Basu A."/>
            <person name="Baxendale J."/>
            <person name="Bayraktaroglu L."/>
            <person name="Beasley E.M."/>
            <person name="Beeson K.Y."/>
            <person name="Benos P.V."/>
            <person name="Berman B.P."/>
            <person name="Bhandari D."/>
            <person name="Bolshakov S."/>
            <person name="Borkova D."/>
            <person name="Botchan M.R."/>
            <person name="Bouck J."/>
            <person name="Brokstein P."/>
            <person name="Brottier P."/>
            <person name="Burtis K.C."/>
            <person name="Busam D.A."/>
            <person name="Butler H."/>
            <person name="Cadieu E."/>
            <person name="Center A."/>
            <person name="Chandra I."/>
            <person name="Cherry J.M."/>
            <person name="Cawley S."/>
            <person name="Dahlke C."/>
            <person name="Davenport L.B."/>
            <person name="Davies P."/>
            <person name="de Pablos B."/>
            <person name="Delcher A."/>
            <person name="Deng Z."/>
            <person name="Mays A.D."/>
            <person name="Dew I."/>
            <person name="Dietz S.M."/>
            <person name="Dodson K."/>
            <person name="Doup L.E."/>
            <person name="Downes M."/>
            <person name="Dugan-Rocha S."/>
            <person name="Dunkov B.C."/>
            <person name="Dunn P."/>
            <person name="Durbin K.J."/>
            <person name="Evangelista C.C."/>
            <person name="Ferraz C."/>
            <person name="Ferriera S."/>
            <person name="Fleischmann W."/>
            <person name="Fosler C."/>
            <person name="Gabrielian A.E."/>
            <person name="Garg N.S."/>
            <person name="Gelbart W.M."/>
            <person name="Glasser K."/>
            <person name="Glodek A."/>
            <person name="Gong F."/>
            <person name="Gorrell J.H."/>
            <person name="Gu Z."/>
            <person name="Guan P."/>
            <person name="Harris M."/>
            <person name="Harris N.L."/>
            <person name="Harvey D.A."/>
            <person name="Heiman T.J."/>
            <person name="Hernandez J.R."/>
            <person name="Houck J."/>
            <person name="Hostin D."/>
            <person name="Houston K.A."/>
            <person name="Howland T.J."/>
            <person name="Wei M.-H."/>
            <person name="Ibegwam C."/>
            <person name="Jalali M."/>
            <person name="Kalush F."/>
            <person name="Karpen G.H."/>
            <person name="Ke Z."/>
            <person name="Kennison J.A."/>
            <person name="Ketchum K.A."/>
            <person name="Kimmel B.E."/>
            <person name="Kodira C.D."/>
            <person name="Kraft C.L."/>
            <person name="Kravitz S."/>
            <person name="Kulp D."/>
            <person name="Lai Z."/>
            <person name="Lasko P."/>
            <person name="Lei Y."/>
            <person name="Levitsky A.A."/>
            <person name="Li J.H."/>
            <person name="Li Z."/>
            <person name="Liang Y."/>
            <person name="Lin X."/>
            <person name="Liu X."/>
            <person name="Mattei B."/>
            <person name="McIntosh T.C."/>
            <person name="McLeod M.P."/>
            <person name="McPherson D."/>
            <person name="Merkulov G."/>
            <person name="Milshina N.V."/>
            <person name="Mobarry C."/>
            <person name="Morris J."/>
            <person name="Moshrefi A."/>
            <person name="Mount S.M."/>
            <person name="Moy M."/>
            <person name="Murphy B."/>
            <person name="Murphy L."/>
            <person name="Muzny D.M."/>
            <person name="Nelson D.L."/>
            <person name="Nelson D.R."/>
            <person name="Nelson K.A."/>
            <person name="Nixon K."/>
            <person name="Nusskern D.R."/>
            <person name="Pacleb J.M."/>
            <person name="Palazzolo M."/>
            <person name="Pittman G.S."/>
            <person name="Pan S."/>
            <person name="Pollard J."/>
            <person name="Puri V."/>
            <person name="Reese M.G."/>
            <person name="Reinert K."/>
            <person name="Remington K."/>
            <person name="Saunders R.D.C."/>
            <person name="Scheeler F."/>
            <person name="Shen H."/>
            <person name="Shue B.C."/>
            <person name="Siden-Kiamos I."/>
            <person name="Simpson M."/>
            <person name="Skupski M.P."/>
            <person name="Smith T.J."/>
            <person name="Spier E."/>
            <person name="Spradling A.C."/>
            <person name="Stapleton M."/>
            <person name="Strong R."/>
            <person name="Sun E."/>
            <person name="Svirskas R."/>
            <person name="Tector C."/>
            <person name="Turner R."/>
            <person name="Venter E."/>
            <person name="Wang A.H."/>
            <person name="Wang X."/>
            <person name="Wang Z.-Y."/>
            <person name="Wassarman D.A."/>
            <person name="Weinstock G.M."/>
            <person name="Weissenbach J."/>
            <person name="Williams S.M."/>
            <person name="Woodage T."/>
            <person name="Worley K.C."/>
            <person name="Wu D."/>
            <person name="Yang S."/>
            <person name="Yao Q.A."/>
            <person name="Ye J."/>
            <person name="Yeh R.-F."/>
            <person name="Zaveri J.S."/>
            <person name="Zhan M."/>
            <person name="Zhang G."/>
            <person name="Zhao Q."/>
            <person name="Zheng L."/>
            <person name="Zheng X.H."/>
            <person name="Zhong F.N."/>
            <person name="Zhong W."/>
            <person name="Zhou X."/>
            <person name="Zhu S.C."/>
            <person name="Zhu X."/>
            <person name="Smith H.O."/>
            <person name="Gibbs R.A."/>
            <person name="Myers E.W."/>
            <person name="Rubin G.M."/>
            <person name="Venter J.C."/>
        </authorList>
    </citation>
    <scope>NUCLEOTIDE SEQUENCE [LARGE SCALE GENOMIC DNA]</scope>
    <source>
        <strain>Berkeley</strain>
    </source>
</reference>
<reference key="3">
    <citation type="journal article" date="2002" name="Genome Biol.">
        <title>Annotation of the Drosophila melanogaster euchromatic genome: a systematic review.</title>
        <authorList>
            <person name="Misra S."/>
            <person name="Crosby M.A."/>
            <person name="Mungall C.J."/>
            <person name="Matthews B.B."/>
            <person name="Campbell K.S."/>
            <person name="Hradecky P."/>
            <person name="Huang Y."/>
            <person name="Kaminker J.S."/>
            <person name="Millburn G.H."/>
            <person name="Prochnik S.E."/>
            <person name="Smith C.D."/>
            <person name="Tupy J.L."/>
            <person name="Whitfield E.J."/>
            <person name="Bayraktaroglu L."/>
            <person name="Berman B.P."/>
            <person name="Bettencourt B.R."/>
            <person name="Celniker S.E."/>
            <person name="de Grey A.D.N.J."/>
            <person name="Drysdale R.A."/>
            <person name="Harris N.L."/>
            <person name="Richter J."/>
            <person name="Russo S."/>
            <person name="Schroeder A.J."/>
            <person name="Shu S.Q."/>
            <person name="Stapleton M."/>
            <person name="Yamada C."/>
            <person name="Ashburner M."/>
            <person name="Gelbart W.M."/>
            <person name="Rubin G.M."/>
            <person name="Lewis S.E."/>
        </authorList>
    </citation>
    <scope>GENOME REANNOTATION</scope>
    <source>
        <strain>Berkeley</strain>
    </source>
</reference>
<reference key="4">
    <citation type="journal article" date="2002" name="Genome Biol.">
        <title>A Drosophila full-length cDNA resource.</title>
        <authorList>
            <person name="Stapleton M."/>
            <person name="Carlson J.W."/>
            <person name="Brokstein P."/>
            <person name="Yu C."/>
            <person name="Champe M."/>
            <person name="George R.A."/>
            <person name="Guarin H."/>
            <person name="Kronmiller B."/>
            <person name="Pacleb J.M."/>
            <person name="Park S."/>
            <person name="Wan K.H."/>
            <person name="Rubin G.M."/>
            <person name="Celniker S.E."/>
        </authorList>
    </citation>
    <scope>NUCLEOTIDE SEQUENCE [LARGE SCALE MRNA]</scope>
    <source>
        <strain>Berkeley</strain>
        <tissue>Embryo</tissue>
    </source>
</reference>
<reference key="5">
    <citation type="journal article" date="1999" name="Dev. Biol.">
        <title>Commissure formation in the embryonic CNS of Drosophila.</title>
        <authorList>
            <person name="Hummel T."/>
            <person name="Schimmelpfeng K."/>
            <person name="Klambt C."/>
        </authorList>
    </citation>
    <scope>FUNCTION</scope>
</reference>
<reference key="6">
    <citation type="journal article" date="2008" name="J. Proteome Res.">
        <title>Phosphoproteome analysis of Drosophila melanogaster embryos.</title>
        <authorList>
            <person name="Zhai B."/>
            <person name="Villen J."/>
            <person name="Beausoleil S.A."/>
            <person name="Mintseris J."/>
            <person name="Gygi S.P."/>
        </authorList>
    </citation>
    <scope>PHOSPHORYLATION [LARGE SCALE ANALYSIS] AT SER-219</scope>
    <scope>IDENTIFICATION BY MASS SPECTROMETRY</scope>
    <source>
        <tissue>Embryo</tissue>
    </source>
</reference>
<evidence type="ECO:0000250" key="1"/>
<evidence type="ECO:0000256" key="2">
    <source>
        <dbReference type="SAM" id="MobiDB-lite"/>
    </source>
</evidence>
<evidence type="ECO:0000269" key="3">
    <source>
    </source>
</evidence>
<evidence type="ECO:0000269" key="4">
    <source>
    </source>
</evidence>
<evidence type="ECO:0000305" key="5"/>
<sequence>MLAALIYTILAILLSVLATSYICIIYGVKRRVLQPVKTKNSTEINHNAYQKYTQAPGPRPWPIIGNLHLLDRYRDSPFAGFTALAQQYGDIYSLTFGHTRCLVVNNLELIREVLNQNGKVMSGRPDFIRYHKLFGGERSNSLALCDWSQLQQKRRNLARRHCSPREFSCFYMKMSQIGCEEMEHWNRELGNQLVPGEPINIKPLILKACANMFSQYMCSLRFDYDDVDFQQIVQYFDEIFWEINQGHPLDFLPWLYPFYQRHLNKIINWSSTIRGFIMERIIRHRELSVDLDEPDRDFTDALLKSLLEDKDVSRNTIIFMLEDFIGGHSAVGNLVMLVLAYIAKNVDIGRRIQEEIDAIIEEENRSINLLDMNAMPYTMATIFEVLRYSSSPIVPHVATEDTVISGYGVTKGTIVFINNYVLNTSEKFWVNPKEFNPLRFLEPSKEQSPKNSKGSDSGIESDNEKLQLKRNIPHFLPFSIGKRTCIGQNLVRGFGFLVVVNVMQRYNISSHNPSTIKISPESLALPADCFPLVLTPREKIGPL</sequence>
<feature type="chain" id="PRO_0000052316" description="Cytochrome P450 307a1">
    <location>
        <begin position="1"/>
        <end position="543"/>
    </location>
</feature>
<feature type="region of interest" description="Disordered" evidence="2">
    <location>
        <begin position="440"/>
        <end position="460"/>
    </location>
</feature>
<feature type="compositionally biased region" description="Polar residues" evidence="2">
    <location>
        <begin position="449"/>
        <end position="460"/>
    </location>
</feature>
<feature type="binding site" description="axial binding residue" evidence="1">
    <location>
        <position position="485"/>
    </location>
    <ligand>
        <name>heme</name>
        <dbReference type="ChEBI" id="CHEBI:30413"/>
    </ligand>
    <ligandPart>
        <name>Fe</name>
        <dbReference type="ChEBI" id="CHEBI:18248"/>
    </ligandPart>
</feature>
<feature type="modified residue" description="Phosphoserine" evidence="4">
    <location>
        <position position="219"/>
    </location>
</feature>
<name>CP307_DROME</name>
<keyword id="KW-0217">Developmental protein</keyword>
<keyword id="KW-0256">Endoplasmic reticulum</keyword>
<keyword id="KW-0349">Heme</keyword>
<keyword id="KW-0408">Iron</keyword>
<keyword id="KW-0472">Membrane</keyword>
<keyword id="KW-0479">Metal-binding</keyword>
<keyword id="KW-0492">Microsome</keyword>
<keyword id="KW-0503">Monooxygenase</keyword>
<keyword id="KW-0560">Oxidoreductase</keyword>
<keyword id="KW-0597">Phosphoprotein</keyword>
<keyword id="KW-1185">Reference proteome</keyword>
<organism>
    <name type="scientific">Drosophila melanogaster</name>
    <name type="common">Fruit fly</name>
    <dbReference type="NCBI Taxonomy" id="7227"/>
    <lineage>
        <taxon>Eukaryota</taxon>
        <taxon>Metazoa</taxon>
        <taxon>Ecdysozoa</taxon>
        <taxon>Arthropoda</taxon>
        <taxon>Hexapoda</taxon>
        <taxon>Insecta</taxon>
        <taxon>Pterygota</taxon>
        <taxon>Neoptera</taxon>
        <taxon>Endopterygota</taxon>
        <taxon>Diptera</taxon>
        <taxon>Brachycera</taxon>
        <taxon>Muscomorpha</taxon>
        <taxon>Ephydroidea</taxon>
        <taxon>Drosophilidae</taxon>
        <taxon>Drosophila</taxon>
        <taxon>Sophophora</taxon>
    </lineage>
</organism>
<proteinExistence type="evidence at protein level"/>
<gene>
    <name type="primary">spo</name>
    <name type="synonym">Cyp307a1</name>
    <name type="ORF">CG10594</name>
</gene>